<evidence type="ECO:0000305" key="1"/>
<protein>
    <recommendedName>
        <fullName>UPF0473 protein MW1565</fullName>
    </recommendedName>
</protein>
<gene>
    <name type="ordered locus">MW1565</name>
</gene>
<dbReference type="EMBL" id="BA000033">
    <property type="protein sequence ID" value="BAB95430.1"/>
    <property type="molecule type" value="Genomic_DNA"/>
</dbReference>
<dbReference type="RefSeq" id="WP_000134779.1">
    <property type="nucleotide sequence ID" value="NC_003923.1"/>
</dbReference>
<dbReference type="KEGG" id="sam:MW1565"/>
<dbReference type="HOGENOM" id="CLU_146610_2_1_9"/>
<dbReference type="HAMAP" id="MF_01448">
    <property type="entry name" value="UPF0473"/>
    <property type="match status" value="1"/>
</dbReference>
<dbReference type="InterPro" id="IPR009711">
    <property type="entry name" value="UPF0473"/>
</dbReference>
<dbReference type="NCBIfam" id="NF010214">
    <property type="entry name" value="PRK13678.1-1"/>
    <property type="match status" value="1"/>
</dbReference>
<dbReference type="PANTHER" id="PTHR40066">
    <property type="entry name" value="UPF0473 PROTEIN CBO2561/CLC_2432"/>
    <property type="match status" value="1"/>
</dbReference>
<dbReference type="PANTHER" id="PTHR40066:SF1">
    <property type="entry name" value="UPF0473 PROTEIN CBO2561_CLC_2432"/>
    <property type="match status" value="1"/>
</dbReference>
<dbReference type="Pfam" id="PF06949">
    <property type="entry name" value="DUF1292"/>
    <property type="match status" value="1"/>
</dbReference>
<sequence>MTEHNHDSQLEINNEEELLTLFDEEGNEVLYRKVLEFYHPEFKKEYVILAEEGAQSDEDDMIELVPMINEPDESGDGGKLVPIETDEEWDMIEEVVNTEMEE</sequence>
<organism>
    <name type="scientific">Staphylococcus aureus (strain MW2)</name>
    <dbReference type="NCBI Taxonomy" id="196620"/>
    <lineage>
        <taxon>Bacteria</taxon>
        <taxon>Bacillati</taxon>
        <taxon>Bacillota</taxon>
        <taxon>Bacilli</taxon>
        <taxon>Bacillales</taxon>
        <taxon>Staphylococcaceae</taxon>
        <taxon>Staphylococcus</taxon>
    </lineage>
</organism>
<proteinExistence type="inferred from homology"/>
<name>Y1565_STAAW</name>
<feature type="chain" id="PRO_0000299295" description="UPF0473 protein MW1565">
    <location>
        <begin position="1"/>
        <end position="102"/>
    </location>
</feature>
<comment type="similarity">
    <text evidence="1">Belongs to the UPF0473 family.</text>
</comment>
<accession>Q7A0R2</accession>
<reference key="1">
    <citation type="journal article" date="2002" name="Lancet">
        <title>Genome and virulence determinants of high virulence community-acquired MRSA.</title>
        <authorList>
            <person name="Baba T."/>
            <person name="Takeuchi F."/>
            <person name="Kuroda M."/>
            <person name="Yuzawa H."/>
            <person name="Aoki K."/>
            <person name="Oguchi A."/>
            <person name="Nagai Y."/>
            <person name="Iwama N."/>
            <person name="Asano K."/>
            <person name="Naimi T."/>
            <person name="Kuroda H."/>
            <person name="Cui L."/>
            <person name="Yamamoto K."/>
            <person name="Hiramatsu K."/>
        </authorList>
    </citation>
    <scope>NUCLEOTIDE SEQUENCE [LARGE SCALE GENOMIC DNA]</scope>
    <source>
        <strain>MW2</strain>
    </source>
</reference>